<comment type="function">
    <text evidence="2 4">Ubiquitin exists either covalently attached to another protein, or free (unanchored). When covalently bound, it is conjugated to target proteins via an isopeptide bond either as a monomer (monoubiquitin), a polymer linked via different Lys residues of the ubiquitin (polyubiquitin chains) or a linear polymer linked via the initiator Met of the ubiquitin (linear polyubiquitin chains). Polyubiquitin chains, when attached to a target protein, have different functions depending on the Lys residue of the ubiquitin that is linked: Lys-6-linked may be involved in DNA repair; Lys-11-linked is involved in ERAD (endoplasmic reticulum-associated degradation) and in cell-cycle regulation; Lys-29-linked is involved in lysosomal degradation; Lys-33-linked is involved in kinase modification; Lys-48-linked is involved in protein degradation via the proteasome; Lys-63-linked is involved in endocytosis, and DNA-damage responses. Linear polymer chains formed via attachment by the initiator Met lead to cell signaling. Ubiquitin is usually conjugated to Lys residues of target proteins, however, in rare cases, conjugation to Cys or Ser residues has been observed. When polyubiquitin is free (unanchored-polyubiquitin), it also has distinct roles, such as in activation of protein kinases, and in signaling (By similarity). Involved in the negative control of switching, as well as in maintaining the yeast cell morphology (By similarity).</text>
</comment>
<comment type="subcellular location">
    <subcellularLocation>
        <location evidence="1">Cytoplasm</location>
    </subcellularLocation>
    <subcellularLocation>
        <location evidence="1">Nucleus</location>
    </subcellularLocation>
</comment>
<comment type="miscellaneous">
    <text>Ubiquitin is encoded by several different genes. UBI1 is a polyprotein containing 3 exact head to tail repeats of ubiquitin, UBI4 is a polyprotein containing 4 exact head to tail repeats of ubiquitin.</text>
</comment>
<comment type="miscellaneous">
    <text evidence="6">For the sake of clarity sequence features are annotated only for the first chain, and are not repeated for each of the following chains.</text>
</comment>
<comment type="similarity">
    <text evidence="6">Belongs to the ubiquitin family.</text>
</comment>
<keyword id="KW-0963">Cytoplasm</keyword>
<keyword id="KW-1017">Isopeptide bond</keyword>
<keyword id="KW-0539">Nucleus</keyword>
<keyword id="KW-0677">Repeat</keyword>
<keyword id="KW-0832">Ubl conjugation</keyword>
<gene>
    <name type="primary">UBI4</name>
</gene>
<reference key="1">
    <citation type="submission" date="1995-09" db="EMBL/GenBank/DDBJ databases">
        <title>Structure and regulation of UBI4 encoding a Candida albicans polyubiquitin gene comprising four ubiquitin units.</title>
        <authorList>
            <person name="Bailey D.A."/>
            <person name="Gow N.A.R."/>
            <person name="Brown A.J.P."/>
        </authorList>
    </citation>
    <scope>NUCLEOTIDE SEQUENCE [GENOMIC DNA]</scope>
</reference>
<evidence type="ECO:0000250" key="1"/>
<evidence type="ECO:0000250" key="2">
    <source>
        <dbReference type="UniProtKB" id="P0CG47"/>
    </source>
</evidence>
<evidence type="ECO:0000250" key="3">
    <source>
        <dbReference type="UniProtKB" id="P0CG63"/>
    </source>
</evidence>
<evidence type="ECO:0000250" key="4">
    <source>
        <dbReference type="UniProtKB" id="Q5ADS0"/>
    </source>
</evidence>
<evidence type="ECO:0000255" key="5">
    <source>
        <dbReference type="PROSITE-ProRule" id="PRU00214"/>
    </source>
</evidence>
<evidence type="ECO:0000305" key="6"/>
<accession>P0CG74</accession>
<accession>P04838</accession>
<accession>P61862</accession>
<dbReference type="EMBL" id="Z54197">
    <property type="protein sequence ID" value="CAA90901.1"/>
    <property type="molecule type" value="Genomic_DNA"/>
</dbReference>
<dbReference type="SMR" id="P0CG74"/>
<dbReference type="EnsemblFungi" id="C3_07270C_A-T">
    <property type="protein sequence ID" value="C3_07270C_A-T-p1"/>
    <property type="gene ID" value="C3_07270C_A"/>
</dbReference>
<dbReference type="EnsemblFungi" id="C4_07180W_A-T">
    <property type="protein sequence ID" value="C4_07180W_A-T-p1"/>
    <property type="gene ID" value="C4_07180W_A"/>
</dbReference>
<dbReference type="VEuPathDB" id="FungiDB:C3_07270C_A"/>
<dbReference type="VEuPathDB" id="FungiDB:C4_07180W_A"/>
<dbReference type="VEuPathDB" id="FungiDB:CAWG_03035"/>
<dbReference type="VEuPathDB" id="FungiDB:CAWG_03112"/>
<dbReference type="GO" id="GO:0005737">
    <property type="term" value="C:cytoplasm"/>
    <property type="evidence" value="ECO:0007669"/>
    <property type="project" value="UniProtKB-SubCell"/>
</dbReference>
<dbReference type="GO" id="GO:0005634">
    <property type="term" value="C:nucleus"/>
    <property type="evidence" value="ECO:0007669"/>
    <property type="project" value="UniProtKB-SubCell"/>
</dbReference>
<dbReference type="CDD" id="cd01803">
    <property type="entry name" value="Ubl_ubiquitin"/>
    <property type="match status" value="4"/>
</dbReference>
<dbReference type="FunFam" id="3.10.20.90:FF:000004">
    <property type="entry name" value="Polyubiquitin Ubiquitin"/>
    <property type="match status" value="4"/>
</dbReference>
<dbReference type="Gene3D" id="3.10.20.90">
    <property type="entry name" value="Phosphatidylinositol 3-kinase Catalytic Subunit, Chain A, domain 1"/>
    <property type="match status" value="4"/>
</dbReference>
<dbReference type="InterPro" id="IPR000626">
    <property type="entry name" value="Ubiquitin-like_dom"/>
</dbReference>
<dbReference type="InterPro" id="IPR029071">
    <property type="entry name" value="Ubiquitin-like_domsf"/>
</dbReference>
<dbReference type="InterPro" id="IPR019954">
    <property type="entry name" value="Ubiquitin_CS"/>
</dbReference>
<dbReference type="InterPro" id="IPR019956">
    <property type="entry name" value="Ubiquitin_dom"/>
</dbReference>
<dbReference type="InterPro" id="IPR050158">
    <property type="entry name" value="Ubiquitin_ubiquitin-like"/>
</dbReference>
<dbReference type="PANTHER" id="PTHR10666">
    <property type="entry name" value="UBIQUITIN"/>
    <property type="match status" value="1"/>
</dbReference>
<dbReference type="Pfam" id="PF00240">
    <property type="entry name" value="ubiquitin"/>
    <property type="match status" value="4"/>
</dbReference>
<dbReference type="PRINTS" id="PR00348">
    <property type="entry name" value="UBIQUITIN"/>
</dbReference>
<dbReference type="SMART" id="SM00213">
    <property type="entry name" value="UBQ"/>
    <property type="match status" value="4"/>
</dbReference>
<dbReference type="SUPFAM" id="SSF54236">
    <property type="entry name" value="Ubiquitin-like"/>
    <property type="match status" value="4"/>
</dbReference>
<dbReference type="PROSITE" id="PS00299">
    <property type="entry name" value="UBIQUITIN_1"/>
    <property type="match status" value="4"/>
</dbReference>
<dbReference type="PROSITE" id="PS50053">
    <property type="entry name" value="UBIQUITIN_2"/>
    <property type="match status" value="4"/>
</dbReference>
<proteinExistence type="inferred from homology"/>
<protein>
    <recommendedName>
        <fullName>Polyubiquitin</fullName>
    </recommendedName>
    <component>
        <recommendedName>
            <fullName>Ubiquitin</fullName>
        </recommendedName>
    </component>
</protein>
<organism>
    <name type="scientific">Candida albicans</name>
    <name type="common">Yeast</name>
    <dbReference type="NCBI Taxonomy" id="5476"/>
    <lineage>
        <taxon>Eukaryota</taxon>
        <taxon>Fungi</taxon>
        <taxon>Dikarya</taxon>
        <taxon>Ascomycota</taxon>
        <taxon>Saccharomycotina</taxon>
        <taxon>Pichiomycetes</taxon>
        <taxon>Debaryomycetaceae</taxon>
        <taxon>Candida/Lodderomyces clade</taxon>
        <taxon>Candida</taxon>
    </lineage>
</organism>
<sequence>MQIFVKTLTGKTITLEVESSDTIDNVKSKIQDKEGIPPDQQRLIFAGKQLEDGRTLSDYNIQKESTLHLVLRLRGGMQIFVKTLTGKTITLEVESSDTIDNVKSKIQDKEGIPPDQQRLIFAGKQLEDGRTLSDYNIQKESTLHLVLRLRGGMQIFVKTLTGKTITLEVESSDTIDNVKSKIQDKEGIPPDQQRLIFAGKQLEDGRTLSDYNIQKESTLHLVLRLRGGMQIFVKTLTGKTITLEVESSDTIDNVKSKIQDKEGIPPDQQRLIFAGKQLEDGRTLSDYNIQKESTLHLVLRLRGGF</sequence>
<name>UBI4P_CANAX</name>
<feature type="chain" id="PRO_0000396284" description="Ubiquitin">
    <location>
        <begin position="1"/>
        <end position="76"/>
    </location>
</feature>
<feature type="chain" id="PRO_0000396285" description="Ubiquitin">
    <location>
        <begin position="77"/>
        <end position="152"/>
    </location>
</feature>
<feature type="chain" id="PRO_0000396286" description="Ubiquitin">
    <location>
        <begin position="153"/>
        <end position="228"/>
    </location>
</feature>
<feature type="chain" id="PRO_0000396287" description="Ubiquitin">
    <location>
        <begin position="229"/>
        <end position="304"/>
    </location>
</feature>
<feature type="propeptide" id="PRO_0000396288">
    <location>
        <position position="305"/>
    </location>
</feature>
<feature type="domain" description="Ubiquitin-like 1" evidence="5">
    <location>
        <begin position="1"/>
        <end position="76"/>
    </location>
</feature>
<feature type="domain" description="Ubiquitin-like 2" evidence="5">
    <location>
        <begin position="77"/>
        <end position="152"/>
    </location>
</feature>
<feature type="domain" description="Ubiquitin-like 3" evidence="5">
    <location>
        <begin position="153"/>
        <end position="228"/>
    </location>
</feature>
<feature type="domain" description="Ubiquitin-like 4" evidence="5">
    <location>
        <begin position="229"/>
        <end position="304"/>
    </location>
</feature>
<feature type="cross-link" description="Glycyl lysine isopeptide (Lys-Gly) (interchain with G-Cter in ubiquitin)" evidence="2">
    <location>
        <position position="6"/>
    </location>
</feature>
<feature type="cross-link" description="Glycyl lysine isopeptide (Lys-Gly) (interchain with G-Cter in ubiquitin)" evidence="2">
    <location>
        <position position="11"/>
    </location>
</feature>
<feature type="cross-link" description="Glycyl lysine isopeptide (Lys-Gly) (interchain with G-Cter in ubiquitin)" evidence="2">
    <location>
        <position position="27"/>
    </location>
</feature>
<feature type="cross-link" description="Glycyl lysine isopeptide (Lys-Gly) (interchain with G-Cter in ubiquitin)" evidence="2">
    <location>
        <position position="29"/>
    </location>
</feature>
<feature type="cross-link" description="Glycyl lysine isopeptide (Lys-Gly) (interchain with G-Cter in ubiquitin)" evidence="2">
    <location>
        <position position="33"/>
    </location>
</feature>
<feature type="cross-link" description="Glycyl lysine isopeptide (Lys-Gly) (interchain with G-Cter in ubiquitin)" evidence="3">
    <location>
        <position position="48"/>
    </location>
</feature>
<feature type="cross-link" description="Glycyl lysine isopeptide (Lys-Gly) (interchain with G-Cter in ubiquitin)" evidence="2">
    <location>
        <position position="63"/>
    </location>
</feature>
<feature type="cross-link" description="Glycyl lysine isopeptide (Gly-Lys) (interchain with K-? in acceptor proteins)" evidence="5">
    <location>
        <position position="76"/>
    </location>
</feature>